<keyword id="KW-0007">Acetylation</keyword>
<keyword id="KW-0025">Alternative splicing</keyword>
<keyword id="KW-0342">GTP-binding</keyword>
<keyword id="KW-0378">Hydrolase</keyword>
<keyword id="KW-0396">Initiation factor</keyword>
<keyword id="KW-0547">Nucleotide-binding</keyword>
<keyword id="KW-0597">Phosphoprotein</keyword>
<keyword id="KW-0648">Protein biosynthesis</keyword>
<keyword id="KW-1267">Proteomics identification</keyword>
<keyword id="KW-1185">Reference proteome</keyword>
<dbReference type="EC" id="3.6.5.3"/>
<dbReference type="EMBL" id="DQ120619">
    <property type="protein sequence ID" value="ABB92405.1"/>
    <property type="status" value="ALT_SEQ"/>
    <property type="molecule type" value="Genomic_DNA"/>
</dbReference>
<dbReference type="EMBL" id="AC068775">
    <property type="status" value="NOT_ANNOTATED_CDS"/>
    <property type="molecule type" value="Genomic_DNA"/>
</dbReference>
<dbReference type="EMBL" id="BC087847">
    <property type="protein sequence ID" value="AAH87847.1"/>
    <property type="molecule type" value="mRNA"/>
</dbReference>
<dbReference type="EMBL" id="AJ006932">
    <property type="protein sequence ID" value="CAA07331.1"/>
    <property type="status" value="ALT_FRAME"/>
    <property type="molecule type" value="Genomic_DNA"/>
</dbReference>
<dbReference type="CCDS" id="CCDS86282.1">
    <molecule id="Q2VIR3-2"/>
</dbReference>
<dbReference type="CCDS" id="CCDS91654.1">
    <molecule id="Q2VIR3-1"/>
</dbReference>
<dbReference type="RefSeq" id="NP_001344660.1">
    <molecule id="Q2VIR3-2"/>
    <property type="nucleotide sequence ID" value="NM_001357731.1"/>
</dbReference>
<dbReference type="RefSeq" id="NP_001344663.1">
    <molecule id="Q2VIR3-1"/>
    <property type="nucleotide sequence ID" value="NM_001357734.3"/>
</dbReference>
<dbReference type="SMR" id="Q2VIR3"/>
<dbReference type="FunCoup" id="Q2VIR3">
    <property type="interactions" value="224"/>
</dbReference>
<dbReference type="IntAct" id="Q2VIR3">
    <property type="interactions" value="12"/>
</dbReference>
<dbReference type="MINT" id="Q2VIR3"/>
<dbReference type="GlyGen" id="Q2VIR3">
    <property type="glycosylation" value="1 site, 1 O-linked glycan (1 site)"/>
</dbReference>
<dbReference type="iPTMnet" id="Q2VIR3"/>
<dbReference type="MetOSite" id="Q2VIR3"/>
<dbReference type="PhosphoSitePlus" id="Q2VIR3"/>
<dbReference type="SwissPalm" id="Q2VIR3"/>
<dbReference type="BioMuta" id="EIF2S3L"/>
<dbReference type="BioMuta" id="ENSG00000180574"/>
<dbReference type="DMDM" id="205830883"/>
<dbReference type="jPOST" id="Q2VIR3"/>
<dbReference type="MassIVE" id="Q2VIR3"/>
<dbReference type="PaxDb" id="9606-ENSP00000445077"/>
<dbReference type="PeptideAtlas" id="Q2VIR3"/>
<dbReference type="ProteomicsDB" id="61512">
    <molecule id="Q2VIR3-1"/>
</dbReference>
<dbReference type="ProteomicsDB" id="61513">
    <molecule id="Q2VIR3-2"/>
</dbReference>
<dbReference type="Pumba" id="Q2VIR3"/>
<dbReference type="Antibodypedia" id="71457">
    <property type="antibodies" value="14 antibodies from 3 providers"/>
</dbReference>
<dbReference type="Ensembl" id="ENST00000322446.3">
    <molecule id="Q2VIR3-2"/>
    <property type="protein sequence ID" value="ENSP00000323063.3"/>
    <property type="gene ID" value="ENSG00000180574.4"/>
</dbReference>
<dbReference type="Ensembl" id="ENST00000538173.2">
    <molecule id="Q2VIR3-1"/>
    <property type="protein sequence ID" value="ENSP00000445077.1"/>
    <property type="gene ID" value="ENSG00000180574.4"/>
</dbReference>
<dbReference type="GeneID" id="255308"/>
<dbReference type="MANE-Select" id="ENST00000538173.2">
    <property type="protein sequence ID" value="ENSP00000445077.1"/>
    <property type="RefSeq nucleotide sequence ID" value="NM_001357734.3"/>
    <property type="RefSeq protein sequence ID" value="NP_001344663.1"/>
</dbReference>
<dbReference type="UCSC" id="uc058lel.1">
    <molecule id="Q2VIR3-1"/>
    <property type="organism name" value="human"/>
</dbReference>
<dbReference type="AGR" id="HGNC:43863"/>
<dbReference type="GeneCards" id="EIF2S3B"/>
<dbReference type="HGNC" id="HGNC:43863">
    <property type="gene designation" value="EIF2S3B"/>
</dbReference>
<dbReference type="HPA" id="ENSG00000180574">
    <property type="expression patterns" value="Low tissue specificity"/>
</dbReference>
<dbReference type="neXtProt" id="NX_Q2VIR3"/>
<dbReference type="OpenTargets" id="ENSG00000180574"/>
<dbReference type="VEuPathDB" id="HostDB:ENSG00000180574"/>
<dbReference type="eggNOG" id="KOG0466">
    <property type="taxonomic scope" value="Eukaryota"/>
</dbReference>
<dbReference type="GeneTree" id="ENSGT00550000074801"/>
<dbReference type="HOGENOM" id="CLU_027154_0_1_1"/>
<dbReference type="InParanoid" id="Q2VIR3"/>
<dbReference type="OMA" id="AMINIDT"/>
<dbReference type="OrthoDB" id="1045173at2759"/>
<dbReference type="PAN-GO" id="Q2VIR3">
    <property type="GO annotations" value="5 GO annotations based on evolutionary models"/>
</dbReference>
<dbReference type="PhylomeDB" id="Q2VIR3"/>
<dbReference type="TreeFam" id="TF101513"/>
<dbReference type="PathwayCommons" id="Q2VIR3"/>
<dbReference type="SignaLink" id="Q2VIR3"/>
<dbReference type="Pharos" id="Q2VIR3">
    <property type="development level" value="Tdark"/>
</dbReference>
<dbReference type="PRO" id="PR:Q2VIR3"/>
<dbReference type="Proteomes" id="UP000005640">
    <property type="component" value="Chromosome 12"/>
</dbReference>
<dbReference type="RNAct" id="Q2VIR3">
    <property type="molecule type" value="protein"/>
</dbReference>
<dbReference type="Bgee" id="ENSG00000180574">
    <property type="expression patterns" value="Expressed in male germ line stem cell (sensu Vertebrata) in testis and 80 other cell types or tissues"/>
</dbReference>
<dbReference type="GO" id="GO:0005850">
    <property type="term" value="C:eukaryotic translation initiation factor 2 complex"/>
    <property type="evidence" value="ECO:0000318"/>
    <property type="project" value="GO_Central"/>
</dbReference>
<dbReference type="GO" id="GO:0005525">
    <property type="term" value="F:GTP binding"/>
    <property type="evidence" value="ECO:0007669"/>
    <property type="project" value="UniProtKB-KW"/>
</dbReference>
<dbReference type="GO" id="GO:0003924">
    <property type="term" value="F:GTPase activity"/>
    <property type="evidence" value="ECO:0007669"/>
    <property type="project" value="InterPro"/>
</dbReference>
<dbReference type="GO" id="GO:0003743">
    <property type="term" value="F:translation initiation factor activity"/>
    <property type="evidence" value="ECO:0000318"/>
    <property type="project" value="GO_Central"/>
</dbReference>
<dbReference type="GO" id="GO:0000049">
    <property type="term" value="F:tRNA binding"/>
    <property type="evidence" value="ECO:0007669"/>
    <property type="project" value="InterPro"/>
</dbReference>
<dbReference type="GO" id="GO:0001731">
    <property type="term" value="P:formation of translation preinitiation complex"/>
    <property type="evidence" value="ECO:0000318"/>
    <property type="project" value="GO_Central"/>
</dbReference>
<dbReference type="CDD" id="cd01888">
    <property type="entry name" value="eIF2_gamma"/>
    <property type="match status" value="1"/>
</dbReference>
<dbReference type="CDD" id="cd03688">
    <property type="entry name" value="eIF2_gamma_II"/>
    <property type="match status" value="1"/>
</dbReference>
<dbReference type="CDD" id="cd15490">
    <property type="entry name" value="eIF2_gamma_III"/>
    <property type="match status" value="1"/>
</dbReference>
<dbReference type="FunFam" id="2.40.30.10:FF:000009">
    <property type="entry name" value="Eukaryotic translation initiation factor 2 subunit gamma"/>
    <property type="match status" value="1"/>
</dbReference>
<dbReference type="FunFam" id="2.40.30.10:FF:000011">
    <property type="entry name" value="Eukaryotic translation initiation factor 2 subunit gamma"/>
    <property type="match status" value="1"/>
</dbReference>
<dbReference type="FunFam" id="3.40.50.300:FF:000065">
    <property type="entry name" value="Eukaryotic translation initiation factor 2 subunit gamma"/>
    <property type="match status" value="1"/>
</dbReference>
<dbReference type="Gene3D" id="3.40.50.300">
    <property type="entry name" value="P-loop containing nucleotide triphosphate hydrolases"/>
    <property type="match status" value="1"/>
</dbReference>
<dbReference type="Gene3D" id="2.40.30.10">
    <property type="entry name" value="Translation factors"/>
    <property type="match status" value="2"/>
</dbReference>
<dbReference type="InterPro" id="IPR004161">
    <property type="entry name" value="EFTu-like_2"/>
</dbReference>
<dbReference type="InterPro" id="IPR050543">
    <property type="entry name" value="eIF2G"/>
</dbReference>
<dbReference type="InterPro" id="IPR015256">
    <property type="entry name" value="eIF2g_C"/>
</dbReference>
<dbReference type="InterPro" id="IPR044127">
    <property type="entry name" value="eIF2g_dom_2"/>
</dbReference>
<dbReference type="InterPro" id="IPR044128">
    <property type="entry name" value="eIF2g_GTP-bd"/>
</dbReference>
<dbReference type="InterPro" id="IPR027417">
    <property type="entry name" value="P-loop_NTPase"/>
</dbReference>
<dbReference type="InterPro" id="IPR000795">
    <property type="entry name" value="T_Tr_GTP-bd_dom"/>
</dbReference>
<dbReference type="InterPro" id="IPR009000">
    <property type="entry name" value="Transl_B-barrel_sf"/>
</dbReference>
<dbReference type="InterPro" id="IPR009001">
    <property type="entry name" value="Transl_elong_EF1A/Init_IF2_C"/>
</dbReference>
<dbReference type="NCBIfam" id="NF003077">
    <property type="entry name" value="PRK04000.1"/>
    <property type="match status" value="1"/>
</dbReference>
<dbReference type="PANTHER" id="PTHR42854">
    <property type="entry name" value="EUKARYOTIC TRANSLATION INITIATION FACTOR 2 SUBUNIT 3 FAMILY MEMBER"/>
    <property type="match status" value="1"/>
</dbReference>
<dbReference type="PANTHER" id="PTHR42854:SF14">
    <property type="entry name" value="EUKARYOTIC TRANSLATION INITIATION FACTOR 2 SUBUNIT 3-RELATED"/>
    <property type="match status" value="1"/>
</dbReference>
<dbReference type="Pfam" id="PF09173">
    <property type="entry name" value="eIF2_C"/>
    <property type="match status" value="1"/>
</dbReference>
<dbReference type="Pfam" id="PF00009">
    <property type="entry name" value="GTP_EFTU"/>
    <property type="match status" value="1"/>
</dbReference>
<dbReference type="Pfam" id="PF03144">
    <property type="entry name" value="GTP_EFTU_D2"/>
    <property type="match status" value="1"/>
</dbReference>
<dbReference type="PRINTS" id="PR00315">
    <property type="entry name" value="ELONGATNFCT"/>
</dbReference>
<dbReference type="SUPFAM" id="SSF50465">
    <property type="entry name" value="EF-Tu/eEF-1alpha/eIF2-gamma C-terminal domain"/>
    <property type="match status" value="1"/>
</dbReference>
<dbReference type="SUPFAM" id="SSF52540">
    <property type="entry name" value="P-loop containing nucleoside triphosphate hydrolases"/>
    <property type="match status" value="1"/>
</dbReference>
<dbReference type="SUPFAM" id="SSF50447">
    <property type="entry name" value="Translation proteins"/>
    <property type="match status" value="1"/>
</dbReference>
<dbReference type="PROSITE" id="PS51722">
    <property type="entry name" value="G_TR_2"/>
    <property type="match status" value="1"/>
</dbReference>
<proteinExistence type="evidence at protein level"/>
<evidence type="ECO:0000250" key="1">
    <source>
        <dbReference type="UniProtKB" id="P05198"/>
    </source>
</evidence>
<evidence type="ECO:0000250" key="2">
    <source>
        <dbReference type="UniProtKB" id="P32481"/>
    </source>
</evidence>
<evidence type="ECO:0000250" key="3">
    <source>
        <dbReference type="UniProtKB" id="P41091"/>
    </source>
</evidence>
<evidence type="ECO:0000250" key="4">
    <source>
        <dbReference type="UniProtKB" id="Q9Z0N1"/>
    </source>
</evidence>
<evidence type="ECO:0000255" key="5">
    <source>
        <dbReference type="PROSITE-ProRule" id="PRU01059"/>
    </source>
</evidence>
<evidence type="ECO:0000269" key="6">
    <source>
    </source>
</evidence>
<evidence type="ECO:0000303" key="7">
    <source>
    </source>
</evidence>
<evidence type="ECO:0000303" key="8">
    <source>
    </source>
</evidence>
<evidence type="ECO:0000305" key="9"/>
<evidence type="ECO:0000312" key="10">
    <source>
        <dbReference type="HGNC" id="HGNC:43863"/>
    </source>
</evidence>
<accession>Q2VIR3</accession>
<accession>F8W810</accession>
<accession>Q5I0X0</accession>
<accession>Q6KF84</accession>
<reference key="1">
    <citation type="journal article" date="2005" name="PLoS Biol.">
        <title>Emergence of young human genes after a burst of retroposition in primates.</title>
        <authorList>
            <person name="Marques A.C."/>
            <person name="Dupanloup I."/>
            <person name="Vinckenbosch N."/>
            <person name="Reymond A."/>
            <person name="Kaessmann H."/>
        </authorList>
    </citation>
    <scope>NUCLEOTIDE SEQUENCE [GENOMIC DNA]</scope>
    <scope>EVOLUTIONARY ANALYSIS</scope>
</reference>
<reference key="2">
    <citation type="journal article" date="2006" name="Nature">
        <title>The finished DNA sequence of human chromosome 12.</title>
        <authorList>
            <person name="Scherer S.E."/>
            <person name="Muzny D.M."/>
            <person name="Buhay C.J."/>
            <person name="Chen R."/>
            <person name="Cree A."/>
            <person name="Ding Y."/>
            <person name="Dugan-Rocha S."/>
            <person name="Gill R."/>
            <person name="Gunaratne P."/>
            <person name="Harris R.A."/>
            <person name="Hawes A.C."/>
            <person name="Hernandez J."/>
            <person name="Hodgson A.V."/>
            <person name="Hume J."/>
            <person name="Jackson A."/>
            <person name="Khan Z.M."/>
            <person name="Kovar-Smith C."/>
            <person name="Lewis L.R."/>
            <person name="Lozado R.J."/>
            <person name="Metzker M.L."/>
            <person name="Milosavljevic A."/>
            <person name="Miner G.R."/>
            <person name="Montgomery K.T."/>
            <person name="Morgan M.B."/>
            <person name="Nazareth L.V."/>
            <person name="Scott G."/>
            <person name="Sodergren E."/>
            <person name="Song X.-Z."/>
            <person name="Steffen D."/>
            <person name="Lovering R.C."/>
            <person name="Wheeler D.A."/>
            <person name="Worley K.C."/>
            <person name="Yuan Y."/>
            <person name="Zhang Z."/>
            <person name="Adams C.Q."/>
            <person name="Ansari-Lari M.A."/>
            <person name="Ayele M."/>
            <person name="Brown M.J."/>
            <person name="Chen G."/>
            <person name="Chen Z."/>
            <person name="Clerc-Blankenburg K.P."/>
            <person name="Davis C."/>
            <person name="Delgado O."/>
            <person name="Dinh H.H."/>
            <person name="Draper H."/>
            <person name="Gonzalez-Garay M.L."/>
            <person name="Havlak P."/>
            <person name="Jackson L.R."/>
            <person name="Jacob L.S."/>
            <person name="Kelly S.H."/>
            <person name="Li L."/>
            <person name="Li Z."/>
            <person name="Liu J."/>
            <person name="Liu W."/>
            <person name="Lu J."/>
            <person name="Maheshwari M."/>
            <person name="Nguyen B.-V."/>
            <person name="Okwuonu G.O."/>
            <person name="Pasternak S."/>
            <person name="Perez L.M."/>
            <person name="Plopper F.J.H."/>
            <person name="Santibanez J."/>
            <person name="Shen H."/>
            <person name="Tabor P.E."/>
            <person name="Verduzco D."/>
            <person name="Waldron L."/>
            <person name="Wang Q."/>
            <person name="Williams G.A."/>
            <person name="Zhang J."/>
            <person name="Zhou J."/>
            <person name="Allen C.C."/>
            <person name="Amin A.G."/>
            <person name="Anyalebechi V."/>
            <person name="Bailey M."/>
            <person name="Barbaria J.A."/>
            <person name="Bimage K.E."/>
            <person name="Bryant N.P."/>
            <person name="Burch P.E."/>
            <person name="Burkett C.E."/>
            <person name="Burrell K.L."/>
            <person name="Calderon E."/>
            <person name="Cardenas V."/>
            <person name="Carter K."/>
            <person name="Casias K."/>
            <person name="Cavazos I."/>
            <person name="Cavazos S.R."/>
            <person name="Ceasar H."/>
            <person name="Chacko J."/>
            <person name="Chan S.N."/>
            <person name="Chavez D."/>
            <person name="Christopoulos C."/>
            <person name="Chu J."/>
            <person name="Cockrell R."/>
            <person name="Cox C.D."/>
            <person name="Dang M."/>
            <person name="Dathorne S.R."/>
            <person name="David R."/>
            <person name="Davis C.M."/>
            <person name="Davy-Carroll L."/>
            <person name="Deshazo D.R."/>
            <person name="Donlin J.E."/>
            <person name="D'Souza L."/>
            <person name="Eaves K.A."/>
            <person name="Egan A."/>
            <person name="Emery-Cohen A.J."/>
            <person name="Escotto M."/>
            <person name="Flagg N."/>
            <person name="Forbes L.D."/>
            <person name="Gabisi A.M."/>
            <person name="Garza M."/>
            <person name="Hamilton C."/>
            <person name="Henderson N."/>
            <person name="Hernandez O."/>
            <person name="Hines S."/>
            <person name="Hogues M.E."/>
            <person name="Huang M."/>
            <person name="Idlebird D.G."/>
            <person name="Johnson R."/>
            <person name="Jolivet A."/>
            <person name="Jones S."/>
            <person name="Kagan R."/>
            <person name="King L.M."/>
            <person name="Leal B."/>
            <person name="Lebow H."/>
            <person name="Lee S."/>
            <person name="LeVan J.M."/>
            <person name="Lewis L.C."/>
            <person name="London P."/>
            <person name="Lorensuhewa L.M."/>
            <person name="Loulseged H."/>
            <person name="Lovett D.A."/>
            <person name="Lucier A."/>
            <person name="Lucier R.L."/>
            <person name="Ma J."/>
            <person name="Madu R.C."/>
            <person name="Mapua P."/>
            <person name="Martindale A.D."/>
            <person name="Martinez E."/>
            <person name="Massey E."/>
            <person name="Mawhiney S."/>
            <person name="Meador M.G."/>
            <person name="Mendez S."/>
            <person name="Mercado C."/>
            <person name="Mercado I.C."/>
            <person name="Merritt C.E."/>
            <person name="Miner Z.L."/>
            <person name="Minja E."/>
            <person name="Mitchell T."/>
            <person name="Mohabbat F."/>
            <person name="Mohabbat K."/>
            <person name="Montgomery B."/>
            <person name="Moore N."/>
            <person name="Morris S."/>
            <person name="Munidasa M."/>
            <person name="Ngo R.N."/>
            <person name="Nguyen N.B."/>
            <person name="Nickerson E."/>
            <person name="Nwaokelemeh O.O."/>
            <person name="Nwokenkwo S."/>
            <person name="Obregon M."/>
            <person name="Oguh M."/>
            <person name="Oragunye N."/>
            <person name="Oviedo R.J."/>
            <person name="Parish B.J."/>
            <person name="Parker D.N."/>
            <person name="Parrish J."/>
            <person name="Parks K.L."/>
            <person name="Paul H.A."/>
            <person name="Payton B.A."/>
            <person name="Perez A."/>
            <person name="Perrin W."/>
            <person name="Pickens A."/>
            <person name="Primus E.L."/>
            <person name="Pu L.-L."/>
            <person name="Puazo M."/>
            <person name="Quiles M.M."/>
            <person name="Quiroz J.B."/>
            <person name="Rabata D."/>
            <person name="Reeves K."/>
            <person name="Ruiz S.J."/>
            <person name="Shao H."/>
            <person name="Sisson I."/>
            <person name="Sonaike T."/>
            <person name="Sorelle R.P."/>
            <person name="Sutton A.E."/>
            <person name="Svatek A.F."/>
            <person name="Svetz L.A."/>
            <person name="Tamerisa K.S."/>
            <person name="Taylor T.R."/>
            <person name="Teague B."/>
            <person name="Thomas N."/>
            <person name="Thorn R.D."/>
            <person name="Trejos Z.Y."/>
            <person name="Trevino B.K."/>
            <person name="Ukegbu O.N."/>
            <person name="Urban J.B."/>
            <person name="Vasquez L.I."/>
            <person name="Vera V.A."/>
            <person name="Villasana D.M."/>
            <person name="Wang L."/>
            <person name="Ward-Moore S."/>
            <person name="Warren J.T."/>
            <person name="Wei X."/>
            <person name="White F."/>
            <person name="Williamson A.L."/>
            <person name="Wleczyk R."/>
            <person name="Wooden H.S."/>
            <person name="Wooden S.H."/>
            <person name="Yen J."/>
            <person name="Yoon L."/>
            <person name="Yoon V."/>
            <person name="Zorrilla S.E."/>
            <person name="Nelson D."/>
            <person name="Kucherlapati R."/>
            <person name="Weinstock G."/>
            <person name="Gibbs R.A."/>
        </authorList>
    </citation>
    <scope>NUCLEOTIDE SEQUENCE [LARGE SCALE GENOMIC DNA]</scope>
</reference>
<reference key="3">
    <citation type="journal article" date="2004" name="Genome Res.">
        <title>The status, quality, and expansion of the NIH full-length cDNA project: the Mammalian Gene Collection (MGC).</title>
        <authorList>
            <consortium name="The MGC Project Team"/>
        </authorList>
    </citation>
    <scope>NUCLEOTIDE SEQUENCE [LARGE SCALE MRNA] OF 2-471 (ISOFORM 2)</scope>
    <source>
        <tissue>Testis</tissue>
    </source>
</reference>
<reference key="4">
    <citation type="journal article" date="1998" name="Hum. Mol. Genet.">
        <title>Characterization of genes encoding translation initiation factor eIF-2gamma in mouse and human: sex chromosome localization, escape from X-inactivation and evolution.</title>
        <authorList>
            <person name="Ehrmann I.E."/>
            <person name="Ellis P.S."/>
            <person name="Mazeyrat S."/>
            <person name="Duthie S."/>
            <person name="Brockdorff N."/>
            <person name="Mattei M.-G."/>
            <person name="Gavin M.A."/>
            <person name="Affara N.A."/>
            <person name="Brown G.M."/>
            <person name="Simpson E."/>
            <person name="Mitchell M.J."/>
            <person name="Scott D.M."/>
        </authorList>
    </citation>
    <scope>NUCLEOTIDE SEQUENCE [GENOMIC DNA] OF 61-309</scope>
    <scope>TISSUE SPECIFICITY</scope>
</reference>
<organism>
    <name type="scientific">Homo sapiens</name>
    <name type="common">Human</name>
    <dbReference type="NCBI Taxonomy" id="9606"/>
    <lineage>
        <taxon>Eukaryota</taxon>
        <taxon>Metazoa</taxon>
        <taxon>Chordata</taxon>
        <taxon>Craniata</taxon>
        <taxon>Vertebrata</taxon>
        <taxon>Euteleostomi</taxon>
        <taxon>Mammalia</taxon>
        <taxon>Eutheria</taxon>
        <taxon>Euarchontoglires</taxon>
        <taxon>Primates</taxon>
        <taxon>Haplorrhini</taxon>
        <taxon>Catarrhini</taxon>
        <taxon>Hominidae</taxon>
        <taxon>Homo</taxon>
    </lineage>
</organism>
<protein>
    <recommendedName>
        <fullName evidence="9">Eukaryotic translation initiation factor 2 subunit 3B</fullName>
        <ecNumber>3.6.5.3</ecNumber>
    </recommendedName>
    <alternativeName>
        <fullName>Eukaryotic translation initiation factor 2 subunit gamma A</fullName>
        <shortName evidence="8">eIF-2-gamma A</shortName>
        <shortName>eIF-2gA</shortName>
    </alternativeName>
</protein>
<name>IF2GL_HUMAN</name>
<sequence length="472" mass="51229">MAGGEAGVTLGQPHLSRQDLTTLDVTKLTPLSHEVISRQATINIGTIGHVAHGKSTVVKAISGVHTVRFKNELERNITIKLGYANAKIYQLDDPSCPRPECYRSCGSSMPDEFPTDIPGTKGNFRLVRHVSFVDCPGHDILMATMLNGAAVMDAALLLIAGNESCPQPQTSEHLAAIEIMKLKHILILQNKIDLVKERQAKEQYEQILAFVQGTVAEGAPIIPISAQLKYNIEVVCEYIVKKIPVPPRDFTSEPRLIVIRSFDVNKPGCEVDDLKGGVAGGSILKGVLKVGQETEVRPGIVSKDSEGKLMCKSIFSKIVSLFAEHNDLQYAAPGGLIGVGTKIDPTLCRADRMVGQILGAVGALPEIFTELEISYFLLRRLLGVRTEGDKKAAKVQKLSKNEVLMVNIGSLSTGGRVSAVKADLGKIVLTNPVCTEVGEKIALSRRVEKHWRLIGWGQIRRGVTIKPTVDDD</sequence>
<feature type="initiator methionine" description="Removed" evidence="3">
    <location>
        <position position="1"/>
    </location>
</feature>
<feature type="chain" id="PRO_0000343941" description="Eukaryotic translation initiation factor 2 subunit 3B">
    <location>
        <begin position="2"/>
        <end position="472"/>
    </location>
</feature>
<feature type="domain" description="tr-type G" evidence="5">
    <location>
        <begin position="39"/>
        <end position="248"/>
    </location>
</feature>
<feature type="region of interest" description="G1" evidence="5">
    <location>
        <begin position="48"/>
        <end position="55"/>
    </location>
</feature>
<feature type="region of interest" description="G2" evidence="5">
    <location>
        <begin position="76"/>
        <end position="80"/>
    </location>
</feature>
<feature type="region of interest" description="G3" evidence="5">
    <location>
        <begin position="134"/>
        <end position="137"/>
    </location>
</feature>
<feature type="region of interest" description="G4" evidence="5">
    <location>
        <begin position="190"/>
        <end position="193"/>
    </location>
</feature>
<feature type="region of interest" description="G5" evidence="5">
    <location>
        <begin position="225"/>
        <end position="227"/>
    </location>
</feature>
<feature type="binding site" evidence="2">
    <location>
        <begin position="51"/>
        <end position="56"/>
    </location>
    <ligand>
        <name>GTP</name>
        <dbReference type="ChEBI" id="CHEBI:37565"/>
    </ligand>
</feature>
<feature type="binding site" evidence="2">
    <location>
        <begin position="190"/>
        <end position="193"/>
    </location>
    <ligand>
        <name>GTP</name>
        <dbReference type="ChEBI" id="CHEBI:37565"/>
    </ligand>
</feature>
<feature type="binding site" evidence="2">
    <location>
        <begin position="225"/>
        <end position="227"/>
    </location>
    <ligand>
        <name>GTP</name>
        <dbReference type="ChEBI" id="CHEBI:37565"/>
    </ligand>
</feature>
<feature type="modified residue" description="N-acetylalanine" evidence="3">
    <location>
        <position position="2"/>
    </location>
</feature>
<feature type="modified residue" description="Phosphoserine" evidence="4">
    <location>
        <position position="16"/>
    </location>
</feature>
<feature type="splice variant" id="VSP_034711" description="In isoform 2." evidence="7">
    <original>VGEKIALSRRVEKHWRLIGWGQIRRGVTIKPTVDDD</original>
    <variation>IHLIHLDLIKELEWGPVLTNETQRKSAANF</variation>
    <location>
        <begin position="437"/>
        <end position="472"/>
    </location>
</feature>
<feature type="sequence conflict" description="In Ref. 1; ABB92405." evidence="9" ref="1">
    <original>I</original>
    <variation>F</variation>
    <location>
        <position position="243"/>
    </location>
</feature>
<feature type="sequence conflict" description="In Ref. 4; CAA07331." evidence="9" ref="4">
    <original>V</original>
    <variation>G</variation>
    <location>
        <position position="258"/>
    </location>
</feature>
<feature type="sequence conflict" description="In Ref. 4; CAA07331." evidence="9" ref="4">
    <original>A</original>
    <variation>T</variation>
    <location>
        <position position="279"/>
    </location>
</feature>
<feature type="sequence conflict" description="In Ref. 4; CAA07331." evidence="9" ref="4">
    <original>Q</original>
    <variation>H</variation>
    <location>
        <position position="292"/>
    </location>
</feature>
<feature type="sequence conflict" description="In Ref. 4; CAA07331." evidence="9" ref="4">
    <original>I</original>
    <variation>L</variation>
    <location>
        <position position="300"/>
    </location>
</feature>
<feature type="sequence conflict" description="In Ref. 1; ABB92405 and 3; AAH87847." evidence="9" ref="1 3">
    <original>S</original>
    <variation>P</variation>
    <location>
        <position position="313"/>
    </location>
</feature>
<feature type="sequence conflict" description="In Ref. 3; AAH87847." evidence="9" ref="3">
    <original>V</original>
    <variation>L</variation>
    <location sequence="Q2VIR3-2">
        <position position="453"/>
    </location>
</feature>
<gene>
    <name evidence="10" type="primary">EIF2S3B</name>
</gene>
<comment type="function">
    <text evidence="1">Member of the eIF2 complex that functions in the early steps of protein synthesis by forming a ternary complex with GTP and initiator tRNA. This complex binds to a 40S ribosomal subunit, followed by mRNA binding to form the 43S pre-initiation complex (43S PIC). Junction of the 60S ribosomal subunit to form the 80S initiation complex is preceded by hydrolysis of the GTP bound to eIF2 and release of an eIF2-GDP binary complex. In order for eIF2 to recycle and catalyze another round of initiation, the GDP bound to eIF2 must exchange with GTP by way of a reaction catalyzed by eIF-2B (By similarity).</text>
</comment>
<comment type="catalytic activity">
    <reaction evidence="2">
        <text>GTP + H2O = GDP + phosphate + H(+)</text>
        <dbReference type="Rhea" id="RHEA:19669"/>
        <dbReference type="ChEBI" id="CHEBI:15377"/>
        <dbReference type="ChEBI" id="CHEBI:15378"/>
        <dbReference type="ChEBI" id="CHEBI:37565"/>
        <dbReference type="ChEBI" id="CHEBI:43474"/>
        <dbReference type="ChEBI" id="CHEBI:58189"/>
        <dbReference type="EC" id="3.6.5.3"/>
    </reaction>
</comment>
<comment type="subunit">
    <text evidence="3">eIF2 is a heterotrimer composed of an alpha, a beta and a gamma chain. eIF2 is member of the 43S pre-initiation complex (43S PIC).</text>
</comment>
<comment type="alternative products">
    <event type="alternative splicing"/>
    <isoform>
        <id>Q2VIR3-1</id>
        <name>1</name>
        <sequence type="displayed"/>
    </isoform>
    <isoform>
        <id>Q2VIR3-2</id>
        <name>2</name>
        <sequence type="described" ref="VSP_034711"/>
    </isoform>
</comment>
<comment type="tissue specificity">
    <text evidence="6">Specifically expressed in testis at the mRNA level.</text>
</comment>
<comment type="similarity">
    <text evidence="5">Belongs to the TRAFAC class translation factor GTPase superfamily. Classic translation factor GTPase family. EIF2G subfamily.</text>
</comment>
<comment type="sequence caution" evidence="9">
    <conflict type="erroneous gene model prediction">
        <sequence resource="EMBL-CDS" id="ABB92405"/>
    </conflict>
</comment>
<comment type="sequence caution" evidence="9">
    <conflict type="frameshift">
        <sequence resource="EMBL-CDS" id="CAA07331"/>
    </conflict>
</comment>